<protein>
    <recommendedName>
        <fullName evidence="1">Probable cleavage and polyadenylation specificity factor subunit 2</fullName>
    </recommendedName>
    <alternativeName>
        <fullName>Cleavage and polyadenylation specificity factor 100 kDa subunit</fullName>
        <shortName>CPSF 100 kDa subunit</shortName>
    </alternativeName>
</protein>
<feature type="chain" id="PRO_0000372682" description="Probable cleavage and polyadenylation specificity factor subunit 2">
    <location>
        <begin position="1"/>
        <end position="842"/>
    </location>
</feature>
<feature type="region of interest" description="Disordered" evidence="4">
    <location>
        <begin position="414"/>
        <end position="442"/>
    </location>
</feature>
<feature type="region of interest" description="Disordered" evidence="4">
    <location>
        <begin position="708"/>
        <end position="747"/>
    </location>
</feature>
<feature type="compositionally biased region" description="Basic and acidic residues" evidence="4">
    <location>
        <begin position="414"/>
        <end position="425"/>
    </location>
</feature>
<feature type="compositionally biased region" description="Acidic residues" evidence="4">
    <location>
        <begin position="432"/>
        <end position="441"/>
    </location>
</feature>
<feature type="compositionally biased region" description="Polar residues" evidence="4">
    <location>
        <begin position="731"/>
        <end position="747"/>
    </location>
</feature>
<dbReference type="EMBL" id="HE601047">
    <property type="protein sequence ID" value="CAP36398.2"/>
    <property type="molecule type" value="Genomic_DNA"/>
</dbReference>
<dbReference type="SMR" id="A8XUS3"/>
<dbReference type="FunCoup" id="A8XUS3">
    <property type="interactions" value="3121"/>
</dbReference>
<dbReference type="STRING" id="6238.A8XUS3"/>
<dbReference type="WormBase" id="CBG19097a">
    <property type="protein sequence ID" value="CBP45280"/>
    <property type="gene ID" value="WBGene00038369"/>
    <property type="gene designation" value="Cbr-cpsf-2"/>
</dbReference>
<dbReference type="eggNOG" id="KOG1135">
    <property type="taxonomic scope" value="Eukaryota"/>
</dbReference>
<dbReference type="HOGENOM" id="CLU_002227_3_0_1"/>
<dbReference type="InParanoid" id="A8XUS3"/>
<dbReference type="OMA" id="QSRHNME"/>
<dbReference type="Proteomes" id="UP000008549">
    <property type="component" value="Unassembled WGS sequence"/>
</dbReference>
<dbReference type="GO" id="GO:0005847">
    <property type="term" value="C:mRNA cleavage and polyadenylation specificity factor complex"/>
    <property type="evidence" value="ECO:0000318"/>
    <property type="project" value="GO_Central"/>
</dbReference>
<dbReference type="GO" id="GO:0003723">
    <property type="term" value="F:RNA binding"/>
    <property type="evidence" value="ECO:0000318"/>
    <property type="project" value="GO_Central"/>
</dbReference>
<dbReference type="GO" id="GO:0006398">
    <property type="term" value="P:mRNA 3'-end processing by stem-loop binding and cleavage"/>
    <property type="evidence" value="ECO:0000318"/>
    <property type="project" value="GO_Central"/>
</dbReference>
<dbReference type="CDD" id="cd16293">
    <property type="entry name" value="CPSF2-like_MBL-fold"/>
    <property type="match status" value="1"/>
</dbReference>
<dbReference type="FunFam" id="3.60.15.10:FF:000008">
    <property type="entry name" value="Cleavage and polyadenylation specificity factor subunit 2"/>
    <property type="match status" value="1"/>
</dbReference>
<dbReference type="Gene3D" id="3.60.15.10">
    <property type="entry name" value="Ribonuclease Z/Hydroxyacylglutathione hydrolase-like"/>
    <property type="match status" value="1"/>
</dbReference>
<dbReference type="InterPro" id="IPR022712">
    <property type="entry name" value="Beta_Casp"/>
</dbReference>
<dbReference type="InterPro" id="IPR027075">
    <property type="entry name" value="CPSF2"/>
</dbReference>
<dbReference type="InterPro" id="IPR025069">
    <property type="entry name" value="Cpsf2_C"/>
</dbReference>
<dbReference type="InterPro" id="IPR035639">
    <property type="entry name" value="CPSF2_MBL"/>
</dbReference>
<dbReference type="InterPro" id="IPR001279">
    <property type="entry name" value="Metallo-B-lactamas"/>
</dbReference>
<dbReference type="InterPro" id="IPR036866">
    <property type="entry name" value="RibonucZ/Hydroxyglut_hydro"/>
</dbReference>
<dbReference type="InterPro" id="IPR011108">
    <property type="entry name" value="RMMBL"/>
</dbReference>
<dbReference type="PANTHER" id="PTHR45922">
    <property type="entry name" value="CLEAVAGE AND POLYADENYLATION SPECIFICITY FACTOR SUBUNIT 2"/>
    <property type="match status" value="1"/>
</dbReference>
<dbReference type="PANTHER" id="PTHR45922:SF1">
    <property type="entry name" value="CLEAVAGE AND POLYADENYLATION SPECIFICITY FACTOR SUBUNIT 2"/>
    <property type="match status" value="1"/>
</dbReference>
<dbReference type="Pfam" id="PF10996">
    <property type="entry name" value="Beta-Casp"/>
    <property type="match status" value="1"/>
</dbReference>
<dbReference type="Pfam" id="PF13299">
    <property type="entry name" value="CPSF100_C"/>
    <property type="match status" value="1"/>
</dbReference>
<dbReference type="Pfam" id="PF16661">
    <property type="entry name" value="Lactamase_B_6"/>
    <property type="match status" value="1"/>
</dbReference>
<dbReference type="Pfam" id="PF07521">
    <property type="entry name" value="RMMBL"/>
    <property type="match status" value="1"/>
</dbReference>
<dbReference type="SMART" id="SM01027">
    <property type="entry name" value="Beta-Casp"/>
    <property type="match status" value="1"/>
</dbReference>
<dbReference type="SMART" id="SM00849">
    <property type="entry name" value="Lactamase_B"/>
    <property type="match status" value="1"/>
</dbReference>
<dbReference type="SUPFAM" id="SSF56281">
    <property type="entry name" value="Metallo-hydrolase/oxidoreductase"/>
    <property type="match status" value="1"/>
</dbReference>
<proteinExistence type="inferred from homology"/>
<reference key="1">
    <citation type="journal article" date="2003" name="PLoS Biol.">
        <title>The genome sequence of Caenorhabditis briggsae: a platform for comparative genomics.</title>
        <authorList>
            <person name="Stein L.D."/>
            <person name="Bao Z."/>
            <person name="Blasiar D."/>
            <person name="Blumenthal T."/>
            <person name="Brent M.R."/>
            <person name="Chen N."/>
            <person name="Chinwalla A."/>
            <person name="Clarke L."/>
            <person name="Clee C."/>
            <person name="Coghlan A."/>
            <person name="Coulson A."/>
            <person name="D'Eustachio P."/>
            <person name="Fitch D.H.A."/>
            <person name="Fulton L.A."/>
            <person name="Fulton R.E."/>
            <person name="Griffiths-Jones S."/>
            <person name="Harris T.W."/>
            <person name="Hillier L.W."/>
            <person name="Kamath R."/>
            <person name="Kuwabara P.E."/>
            <person name="Mardis E.R."/>
            <person name="Marra M.A."/>
            <person name="Miner T.L."/>
            <person name="Minx P."/>
            <person name="Mullikin J.C."/>
            <person name="Plumb R.W."/>
            <person name="Rogers J."/>
            <person name="Schein J.E."/>
            <person name="Sohrmann M."/>
            <person name="Spieth J."/>
            <person name="Stajich J.E."/>
            <person name="Wei C."/>
            <person name="Willey D."/>
            <person name="Wilson R.K."/>
            <person name="Durbin R.M."/>
            <person name="Waterston R.H."/>
        </authorList>
    </citation>
    <scope>NUCLEOTIDE SEQUENCE [LARGE SCALE GENOMIC DNA]</scope>
    <source>
        <strain>AF16</strain>
    </source>
</reference>
<gene>
    <name evidence="1" type="primary">cpsf-2</name>
    <name type="ORF">CBG19097</name>
</gene>
<accession>A8XUS3</accession>
<keyword id="KW-0507">mRNA processing</keyword>
<keyword id="KW-0539">Nucleus</keyword>
<keyword id="KW-1185">Reference proteome</keyword>
<keyword id="KW-0694">RNA-binding</keyword>
<comment type="function">
    <text evidence="2">CPSF plays a key role in pre-mRNA 3'-end formation, recognizing the AAUAAA signal sequence and interacting with poly(A)polymerase and other factors to bring about cleavage and poly(A) addition.</text>
</comment>
<comment type="subunit">
    <text evidence="2">CPSF is a heterotetramer composed of four distinct subunits 160, 100, 70 and 30 kDa.</text>
</comment>
<comment type="subcellular location">
    <subcellularLocation>
        <location evidence="3">Nucleus</location>
    </subcellularLocation>
</comment>
<comment type="similarity">
    <text evidence="3">Belongs to the metallo-beta-lactamase superfamily. RNA-metabolizing metallo-beta-lactamase-like family. CPSF2/YSH1 subfamily.</text>
</comment>
<sequence>MTSIIKLKVFSGAKDEGPLCYLLQVDNDYILLDCGWDERFELKYFEELRPYIPKISAVLISHPDPLHLGGLPYLVAKCGLTAPVYCTVPVYKMGQMFIYDLVYSHLDVEEFQHYSLDDVDMAFEKVEQVKYNQTVVLKGDSGVNFTAMPAGHMIGGSMWRICRITGEDIIYCVDFNHRKDRHLSGCSFDNFNRPHLLITGAHHISLPQMKRKDRDEQLVTKILRTVRQKGDCMIVIDTAGRVLELAYLLDQLWANQDAGLSTYNLVMMSHVASSVVQFAKSQLEWMDEKLFRYDSSSARYNPFTLKNVNLVHSHLELIKIRSPKVVLCSSQDMETGFSRELFLDWCADQRNGVILTARPASFTLAARLVELAERANDGVLRNEDKHLSLLVRKRVPLEGEELLEYKRRKAERDAEETRIRMERARRQAQANESDDSDDDDIAAPIVPRLSEKDHRSFDAIENDSHCFDIMAKWDNQQKASFFKSTKKSFPMYPYIEEKVKWDDYGEVIKPEDYTVISKIDMRKGKNKDEPVVVHKREDEEEVYNPNDHDEEMPTKCVEFRNRIEISCRVEFIEYEGISDGESTKKMLAGLMPRQIIIVHGSRDDTRDLYAYFTDNGFKKDQLNTPVANELIDASVESFIYQVSLSDALLAEIQFKEVSEGNSLAWIDARIQEKESIDNMLVAGASQLTIEDSLQEDAVEVVEEDVIPMETFQDDQNKQEASEENVAEGEKSNGQSKENDENASSIPIETQPKIRGTLILTPLPKKQIPVHQAIFVNDPKLSEFKNLLVDKGYKAEFFSGTLLINGGKCSILVERLDSKWRVLSQKTFTNFGSCSTTSLLFCK</sequence>
<organism>
    <name type="scientific">Caenorhabditis briggsae</name>
    <dbReference type="NCBI Taxonomy" id="6238"/>
    <lineage>
        <taxon>Eukaryota</taxon>
        <taxon>Metazoa</taxon>
        <taxon>Ecdysozoa</taxon>
        <taxon>Nematoda</taxon>
        <taxon>Chromadorea</taxon>
        <taxon>Rhabditida</taxon>
        <taxon>Rhabditina</taxon>
        <taxon>Rhabditomorpha</taxon>
        <taxon>Rhabditoidea</taxon>
        <taxon>Rhabditidae</taxon>
        <taxon>Peloderinae</taxon>
        <taxon>Caenorhabditis</taxon>
    </lineage>
</organism>
<evidence type="ECO:0000250" key="1">
    <source>
        <dbReference type="UniProtKB" id="O17403"/>
    </source>
</evidence>
<evidence type="ECO:0000250" key="2">
    <source>
        <dbReference type="UniProtKB" id="Q9P2I0"/>
    </source>
</evidence>
<evidence type="ECO:0000255" key="3"/>
<evidence type="ECO:0000256" key="4">
    <source>
        <dbReference type="SAM" id="MobiDB-lite"/>
    </source>
</evidence>
<name>CPSF2_CAEBR</name>